<organism>
    <name type="scientific">Homo sapiens</name>
    <name type="common">Human</name>
    <dbReference type="NCBI Taxonomy" id="9606"/>
    <lineage>
        <taxon>Eukaryota</taxon>
        <taxon>Metazoa</taxon>
        <taxon>Chordata</taxon>
        <taxon>Craniata</taxon>
        <taxon>Vertebrata</taxon>
        <taxon>Euteleostomi</taxon>
        <taxon>Mammalia</taxon>
        <taxon>Eutheria</taxon>
        <taxon>Euarchontoglires</taxon>
        <taxon>Primates</taxon>
        <taxon>Haplorrhini</taxon>
        <taxon>Catarrhini</taxon>
        <taxon>Hominidae</taxon>
        <taxon>Homo</taxon>
    </lineage>
</organism>
<protein>
    <recommendedName>
        <fullName>Transcription factor Sp7</fullName>
    </recommendedName>
    <alternativeName>
        <fullName>Zinc finger protein osterix</fullName>
    </alternativeName>
</protein>
<accession>Q8TDD2</accession>
<accession>B3KY26</accession>
<accession>Q3MJ72</accession>
<accession>Q7Z718</accession>
<name>SP7_HUMAN</name>
<dbReference type="EMBL" id="AF466179">
    <property type="protein sequence ID" value="AAO33377.1"/>
    <property type="molecule type" value="mRNA"/>
</dbReference>
<dbReference type="EMBL" id="AY150673">
    <property type="protein sequence ID" value="AAN85556.1"/>
    <property type="molecule type" value="mRNA"/>
</dbReference>
<dbReference type="EMBL" id="AY150674">
    <property type="protein sequence ID" value="AAN85557.1"/>
    <property type="molecule type" value="mRNA"/>
</dbReference>
<dbReference type="EMBL" id="AF477981">
    <property type="protein sequence ID" value="AAL84281.1"/>
    <property type="molecule type" value="mRNA"/>
</dbReference>
<dbReference type="EMBL" id="AK128520">
    <property type="protein sequence ID" value="BAG54688.1"/>
    <property type="molecule type" value="mRNA"/>
</dbReference>
<dbReference type="EMBL" id="AC073611">
    <property type="status" value="NOT_ANNOTATED_CDS"/>
    <property type="molecule type" value="Genomic_DNA"/>
</dbReference>
<dbReference type="EMBL" id="CH471054">
    <property type="protein sequence ID" value="EAW96695.1"/>
    <property type="molecule type" value="Genomic_DNA"/>
</dbReference>
<dbReference type="EMBL" id="CH471054">
    <property type="protein sequence ID" value="EAW96697.1"/>
    <property type="molecule type" value="Genomic_DNA"/>
</dbReference>
<dbReference type="EMBL" id="BC101549">
    <property type="protein sequence ID" value="AAI01550.1"/>
    <property type="molecule type" value="mRNA"/>
</dbReference>
<dbReference type="EMBL" id="BC113613">
    <property type="protein sequence ID" value="AAI13614.1"/>
    <property type="molecule type" value="mRNA"/>
</dbReference>
<dbReference type="CCDS" id="CCDS44897.1">
    <molecule id="Q8TDD2-1"/>
</dbReference>
<dbReference type="CCDS" id="CCDS73475.1">
    <molecule id="Q8TDD2-2"/>
</dbReference>
<dbReference type="RefSeq" id="NP_001166938.1">
    <molecule id="Q8TDD2-1"/>
    <property type="nucleotide sequence ID" value="NM_001173467.3"/>
</dbReference>
<dbReference type="RefSeq" id="NP_001287766.1">
    <molecule id="Q8TDD2-2"/>
    <property type="nucleotide sequence ID" value="NM_001300837.2"/>
</dbReference>
<dbReference type="RefSeq" id="NP_690599.1">
    <molecule id="Q8TDD2-1"/>
    <property type="nucleotide sequence ID" value="NM_152860.2"/>
</dbReference>
<dbReference type="RefSeq" id="XP_011536202.1">
    <property type="nucleotide sequence ID" value="XM_011537900.2"/>
</dbReference>
<dbReference type="RefSeq" id="XP_054189114.1">
    <molecule id="Q8TDD2-1"/>
    <property type="nucleotide sequence ID" value="XM_054333139.1"/>
</dbReference>
<dbReference type="RefSeq" id="XP_054227053.1">
    <molecule id="Q8TDD2-1"/>
    <property type="nucleotide sequence ID" value="XM_054371078.1"/>
</dbReference>
<dbReference type="SMR" id="Q8TDD2"/>
<dbReference type="BioGRID" id="125723">
    <property type="interactions" value="299"/>
</dbReference>
<dbReference type="FunCoup" id="Q8TDD2">
    <property type="interactions" value="996"/>
</dbReference>
<dbReference type="IntAct" id="Q8TDD2">
    <property type="interactions" value="286"/>
</dbReference>
<dbReference type="MINT" id="Q8TDD2"/>
<dbReference type="STRING" id="9606.ENSP00000443827"/>
<dbReference type="GlyGen" id="Q8TDD2">
    <property type="glycosylation" value="4 sites, 1 O-linked glycan (1 site)"/>
</dbReference>
<dbReference type="iPTMnet" id="Q8TDD2"/>
<dbReference type="PhosphoSitePlus" id="Q8TDD2"/>
<dbReference type="BioMuta" id="SP7"/>
<dbReference type="DMDM" id="30913318"/>
<dbReference type="MassIVE" id="Q8TDD2"/>
<dbReference type="PaxDb" id="9606-ENSP00000443827"/>
<dbReference type="PeptideAtlas" id="Q8TDD2"/>
<dbReference type="ProteomicsDB" id="69477"/>
<dbReference type="ProteomicsDB" id="74269">
    <molecule id="Q8TDD2-1"/>
</dbReference>
<dbReference type="Antibodypedia" id="3133">
    <property type="antibodies" value="177 antibodies from 33 providers"/>
</dbReference>
<dbReference type="DNASU" id="121340"/>
<dbReference type="Ensembl" id="ENST00000303846.3">
    <molecule id="Q8TDD2-1"/>
    <property type="protein sequence ID" value="ENSP00000302812.3"/>
    <property type="gene ID" value="ENSG00000170374.6"/>
</dbReference>
<dbReference type="Ensembl" id="ENST00000536324.4">
    <molecule id="Q8TDD2-1"/>
    <property type="protein sequence ID" value="ENSP00000443827.2"/>
    <property type="gene ID" value="ENSG00000170374.6"/>
</dbReference>
<dbReference type="Ensembl" id="ENST00000537210.2">
    <molecule id="Q8TDD2-2"/>
    <property type="protein sequence ID" value="ENSP00000441367.2"/>
    <property type="gene ID" value="ENSG00000170374.6"/>
</dbReference>
<dbReference type="Ensembl" id="ENST00000708981.1">
    <molecule id="Q8TDD2-1"/>
    <property type="protein sequence ID" value="ENSP00000517441.1"/>
    <property type="gene ID" value="ENSG00000291837.1"/>
</dbReference>
<dbReference type="Ensembl" id="ENST00000708982.1">
    <molecule id="Q8TDD2-1"/>
    <property type="protein sequence ID" value="ENSP00000517442.1"/>
    <property type="gene ID" value="ENSG00000291837.1"/>
</dbReference>
<dbReference type="Ensembl" id="ENST00000708983.1">
    <molecule id="Q8TDD2-2"/>
    <property type="protein sequence ID" value="ENSP00000517443.1"/>
    <property type="gene ID" value="ENSG00000291837.1"/>
</dbReference>
<dbReference type="GeneID" id="121340"/>
<dbReference type="KEGG" id="hsa:121340"/>
<dbReference type="MANE-Select" id="ENST00000536324.4">
    <property type="protein sequence ID" value="ENSP00000443827.2"/>
    <property type="RefSeq nucleotide sequence ID" value="NM_001173467.3"/>
    <property type="RefSeq protein sequence ID" value="NP_001166938.1"/>
</dbReference>
<dbReference type="UCSC" id="uc001sct.4">
    <molecule id="Q8TDD2-1"/>
    <property type="organism name" value="human"/>
</dbReference>
<dbReference type="AGR" id="HGNC:17321"/>
<dbReference type="CTD" id="121340"/>
<dbReference type="DisGeNET" id="121340"/>
<dbReference type="GeneCards" id="SP7"/>
<dbReference type="HGNC" id="HGNC:17321">
    <property type="gene designation" value="SP7"/>
</dbReference>
<dbReference type="HPA" id="ENSG00000170374">
    <property type="expression patterns" value="Not detected"/>
</dbReference>
<dbReference type="MalaCards" id="SP7"/>
<dbReference type="MIM" id="606633">
    <property type="type" value="gene"/>
</dbReference>
<dbReference type="MIM" id="613849">
    <property type="type" value="phenotype"/>
</dbReference>
<dbReference type="neXtProt" id="NX_Q8TDD2"/>
<dbReference type="OpenTargets" id="ENSG00000170374"/>
<dbReference type="Orphanet" id="1513">
    <property type="disease" value="Craniodiaphyseal dysplasia"/>
</dbReference>
<dbReference type="Orphanet" id="216820">
    <property type="disease" value="Osteogenesis imperfecta type 4"/>
</dbReference>
<dbReference type="PharmGKB" id="PA134917046"/>
<dbReference type="VEuPathDB" id="HostDB:ENSG00000170374"/>
<dbReference type="eggNOG" id="KOG1721">
    <property type="taxonomic scope" value="Eukaryota"/>
</dbReference>
<dbReference type="GeneTree" id="ENSGT00940000161293"/>
<dbReference type="HOGENOM" id="CLU_019484_4_2_1"/>
<dbReference type="InParanoid" id="Q8TDD2"/>
<dbReference type="OMA" id="PSPWWDM"/>
<dbReference type="OrthoDB" id="6365676at2759"/>
<dbReference type="PAN-GO" id="Q8TDD2">
    <property type="GO annotations" value="3 GO annotations based on evolutionary models"/>
</dbReference>
<dbReference type="PhylomeDB" id="Q8TDD2"/>
<dbReference type="TreeFam" id="TF350150"/>
<dbReference type="PathwayCommons" id="Q8TDD2"/>
<dbReference type="Reactome" id="R-HSA-8940973">
    <property type="pathway name" value="RUNX2 regulates osteoblast differentiation"/>
</dbReference>
<dbReference type="SignaLink" id="Q8TDD2"/>
<dbReference type="SIGNOR" id="Q8TDD2"/>
<dbReference type="BioGRID-ORCS" id="121340">
    <property type="hits" value="18 hits in 1169 CRISPR screens"/>
</dbReference>
<dbReference type="GeneWiki" id="Sp7_transcription_factor"/>
<dbReference type="GenomeRNAi" id="121340"/>
<dbReference type="Pharos" id="Q8TDD2">
    <property type="development level" value="Tbio"/>
</dbReference>
<dbReference type="PRO" id="PR:Q8TDD2"/>
<dbReference type="Proteomes" id="UP000005640">
    <property type="component" value="Chromosome 12"/>
</dbReference>
<dbReference type="RNAct" id="Q8TDD2">
    <property type="molecule type" value="protein"/>
</dbReference>
<dbReference type="Bgee" id="ENSG00000170374">
    <property type="expression patterns" value="Expressed in primordial germ cell in gonad and 31 other cell types or tissues"/>
</dbReference>
<dbReference type="ExpressionAtlas" id="Q8TDD2">
    <property type="expression patterns" value="baseline and differential"/>
</dbReference>
<dbReference type="GO" id="GO:0000785">
    <property type="term" value="C:chromatin"/>
    <property type="evidence" value="ECO:0000247"/>
    <property type="project" value="NTNU_SB"/>
</dbReference>
<dbReference type="GO" id="GO:0005737">
    <property type="term" value="C:cytoplasm"/>
    <property type="evidence" value="ECO:0000314"/>
    <property type="project" value="BHF-UCL"/>
</dbReference>
<dbReference type="GO" id="GO:0005634">
    <property type="term" value="C:nucleus"/>
    <property type="evidence" value="ECO:0000314"/>
    <property type="project" value="BHF-UCL"/>
</dbReference>
<dbReference type="GO" id="GO:0017151">
    <property type="term" value="F:DEAD/H-box RNA helicase binding"/>
    <property type="evidence" value="ECO:0000250"/>
    <property type="project" value="BHF-UCL"/>
</dbReference>
<dbReference type="GO" id="GO:0003677">
    <property type="term" value="F:DNA binding"/>
    <property type="evidence" value="ECO:0000250"/>
    <property type="project" value="BHF-UCL"/>
</dbReference>
<dbReference type="GO" id="GO:0001228">
    <property type="term" value="F:DNA-binding transcription activator activity, RNA polymerase II-specific"/>
    <property type="evidence" value="ECO:0000250"/>
    <property type="project" value="UniProtKB"/>
</dbReference>
<dbReference type="GO" id="GO:0000981">
    <property type="term" value="F:DNA-binding transcription factor activity, RNA polymerase II-specific"/>
    <property type="evidence" value="ECO:0000247"/>
    <property type="project" value="NTNU_SB"/>
</dbReference>
<dbReference type="GO" id="GO:0000978">
    <property type="term" value="F:RNA polymerase II cis-regulatory region sequence-specific DNA binding"/>
    <property type="evidence" value="ECO:0000318"/>
    <property type="project" value="GO_Central"/>
</dbReference>
<dbReference type="GO" id="GO:0008270">
    <property type="term" value="F:zinc ion binding"/>
    <property type="evidence" value="ECO:0007669"/>
    <property type="project" value="UniProtKB-KW"/>
</dbReference>
<dbReference type="GO" id="GO:0034224">
    <property type="term" value="P:cellular response to zinc ion starvation"/>
    <property type="evidence" value="ECO:0007669"/>
    <property type="project" value="Ensembl"/>
</dbReference>
<dbReference type="GO" id="GO:0071529">
    <property type="term" value="P:cementum mineralization"/>
    <property type="evidence" value="ECO:0007669"/>
    <property type="project" value="Ensembl"/>
</dbReference>
<dbReference type="GO" id="GO:0071344">
    <property type="term" value="P:diphosphate metabolic process"/>
    <property type="evidence" value="ECO:0007669"/>
    <property type="project" value="Ensembl"/>
</dbReference>
<dbReference type="GO" id="GO:0010467">
    <property type="term" value="P:gene expression"/>
    <property type="evidence" value="ECO:0007669"/>
    <property type="project" value="Ensembl"/>
</dbReference>
<dbReference type="GO" id="GO:0060218">
    <property type="term" value="P:hematopoietic stem cell differentiation"/>
    <property type="evidence" value="ECO:0000314"/>
    <property type="project" value="BHF-UCL"/>
</dbReference>
<dbReference type="GO" id="GO:0001649">
    <property type="term" value="P:osteoblast differentiation"/>
    <property type="evidence" value="ECO:0000314"/>
    <property type="project" value="BHF-UCL"/>
</dbReference>
<dbReference type="GO" id="GO:2000738">
    <property type="term" value="P:positive regulation of stem cell differentiation"/>
    <property type="evidence" value="ECO:0000314"/>
    <property type="project" value="BHF-UCL"/>
</dbReference>
<dbReference type="GO" id="GO:0045944">
    <property type="term" value="P:positive regulation of transcription by RNA polymerase II"/>
    <property type="evidence" value="ECO:0000314"/>
    <property type="project" value="BHF-UCL"/>
</dbReference>
<dbReference type="GO" id="GO:0006357">
    <property type="term" value="P:regulation of transcription by RNA polymerase II"/>
    <property type="evidence" value="ECO:0000250"/>
    <property type="project" value="BHF-UCL"/>
</dbReference>
<dbReference type="GO" id="GO:0032868">
    <property type="term" value="P:response to insulin"/>
    <property type="evidence" value="ECO:0007669"/>
    <property type="project" value="Ensembl"/>
</dbReference>
<dbReference type="CDD" id="cd22542">
    <property type="entry name" value="SP7_N"/>
    <property type="match status" value="1"/>
</dbReference>
<dbReference type="FunFam" id="3.30.160.60:FF:000077">
    <property type="entry name" value="Sp8 transcription factor"/>
    <property type="match status" value="1"/>
</dbReference>
<dbReference type="FunFam" id="3.30.160.60:FF:000014">
    <property type="entry name" value="Transcription factor Sp3"/>
    <property type="match status" value="1"/>
</dbReference>
<dbReference type="FunFam" id="3.30.160.60:FF:000100">
    <property type="entry name" value="Zinc finger 45-like"/>
    <property type="match status" value="1"/>
</dbReference>
<dbReference type="Gene3D" id="3.30.160.60">
    <property type="entry name" value="Classic Zinc Finger"/>
    <property type="match status" value="3"/>
</dbReference>
<dbReference type="InterPro" id="IPR036236">
    <property type="entry name" value="Znf_C2H2_sf"/>
</dbReference>
<dbReference type="InterPro" id="IPR013087">
    <property type="entry name" value="Znf_C2H2_type"/>
</dbReference>
<dbReference type="PANTHER" id="PTHR23235">
    <property type="entry name" value="KRUEPPEL-LIKE TRANSCRIPTION FACTOR"/>
    <property type="match status" value="1"/>
</dbReference>
<dbReference type="PANTHER" id="PTHR23235:SF19">
    <property type="entry name" value="TRANSCRIPTION FACTOR SP7"/>
    <property type="match status" value="1"/>
</dbReference>
<dbReference type="Pfam" id="PF00096">
    <property type="entry name" value="zf-C2H2"/>
    <property type="match status" value="3"/>
</dbReference>
<dbReference type="SMART" id="SM00355">
    <property type="entry name" value="ZnF_C2H2"/>
    <property type="match status" value="3"/>
</dbReference>
<dbReference type="SUPFAM" id="SSF57667">
    <property type="entry name" value="beta-beta-alpha zinc fingers"/>
    <property type="match status" value="2"/>
</dbReference>
<dbReference type="PROSITE" id="PS00028">
    <property type="entry name" value="ZINC_FINGER_C2H2_1"/>
    <property type="match status" value="3"/>
</dbReference>
<dbReference type="PROSITE" id="PS50157">
    <property type="entry name" value="ZINC_FINGER_C2H2_2"/>
    <property type="match status" value="3"/>
</dbReference>
<gene>
    <name type="primary">SP7</name>
    <name type="synonym">OSX</name>
</gene>
<feature type="chain" id="PRO_0000047150" description="Transcription factor Sp7">
    <location>
        <begin position="1"/>
        <end position="431"/>
    </location>
</feature>
<feature type="zinc finger region" description="C2H2-type 1" evidence="2">
    <location>
        <begin position="294"/>
        <end position="318"/>
    </location>
</feature>
<feature type="zinc finger region" description="C2H2-type 2" evidence="2">
    <location>
        <begin position="324"/>
        <end position="348"/>
    </location>
</feature>
<feature type="zinc finger region" description="C2H2-type 3" evidence="2">
    <location>
        <begin position="354"/>
        <end position="376"/>
    </location>
</feature>
<feature type="region of interest" description="Disordered" evidence="3">
    <location>
        <begin position="30"/>
        <end position="56"/>
    </location>
</feature>
<feature type="region of interest" description="Disordered" evidence="3">
    <location>
        <begin position="71"/>
        <end position="115"/>
    </location>
</feature>
<feature type="region of interest" description="Disordered" evidence="3">
    <location>
        <begin position="154"/>
        <end position="260"/>
    </location>
</feature>
<feature type="region of interest" description="Disordered" evidence="3">
    <location>
        <begin position="367"/>
        <end position="431"/>
    </location>
</feature>
<feature type="short sequence motif" description="9aaTAD" evidence="7">
    <location>
        <begin position="156"/>
        <end position="164"/>
    </location>
</feature>
<feature type="compositionally biased region" description="Gly residues" evidence="3">
    <location>
        <begin position="166"/>
        <end position="178"/>
    </location>
</feature>
<feature type="compositionally biased region" description="Polar residues" evidence="3">
    <location>
        <begin position="403"/>
        <end position="412"/>
    </location>
</feature>
<feature type="modified residue" description="N6-propionyllysine" evidence="1">
    <location>
        <position position="41"/>
    </location>
</feature>
<feature type="modified residue" description="N6-propionyllysine" evidence="1">
    <location>
        <position position="45"/>
    </location>
</feature>
<feature type="modified residue" description="N6-propionyllysine" evidence="1">
    <location>
        <position position="361"/>
    </location>
</feature>
<feature type="modified residue" description="N6-propionyllysine" evidence="1">
    <location>
        <position position="371"/>
    </location>
</feature>
<feature type="cross-link" description="Glycyl lysine isopeptide (Lys-Gly) (interchain with G-Cter in ubiquitin)" evidence="6">
    <location>
        <position position="58"/>
    </location>
</feature>
<feature type="cross-link" description="Glycyl lysine isopeptide (Lys-Gly) (interchain with G-Cter in ubiquitin)" evidence="6">
    <location>
        <position position="230"/>
    </location>
</feature>
<feature type="splice variant" id="VSP_047639" description="In isoform 2." evidence="8">
    <location>
        <begin position="1"/>
        <end position="18"/>
    </location>
</feature>
<feature type="mutagenesis site" description="Enhances osteogenic differentiation in C2C12 cells." evidence="6">
    <original>K</original>
    <variation>R</variation>
    <location>
        <position position="58"/>
    </location>
</feature>
<feature type="mutagenesis site" description="Enhances osteogenic differentiation in C2C12 cells." evidence="6">
    <original>K</original>
    <variation>R</variation>
    <location>
        <position position="230"/>
    </location>
</feature>
<sequence>MASSLLEEEVHYGSSPLAMLTAACSKFGGSSPLRDSTTLGKAGTKKPYSVGSDLSASKTMGDAYPAPFTSTNGLLSPAGSPPAPTSGYANDYPPFSHSFPGPTGTQDPGLLVPKGHSSSDCLPSVYTSLDMTHPYGSWYKAGIHAGISPGPGNTPTPWWDMHPGGNWLGGGQGQGDGLQGTLPTGPAQPPLNPQLPTYPSDFAPLNPAPYPAPHLLQPGPQHVLPQDVYKPKAVGNSGQLEGSGGAKPPRGASTGGSGGYGGSGAGRSSCDCPNCQELERLGAAAAGLRKKPIHSCHIPGCGKVYGKASHLKAHLRWHTGERPFVCNWLFCGKRFTRSDELERHVRTHTREKKFTCLLCSKRFTRSDHLSKHQRTHGEPGPGPPPSGPKELGEGRSTGEEEASQTPRPSASPATPEKAPGGSPEQSNLLEI</sequence>
<comment type="function">
    <text evidence="1 6">Transcriptional activator essential for osteoblast differentiation (PubMed:23457570). Binds to SP1 and EKLF consensus sequences and to other G/C-rich sequences (By similarity).</text>
</comment>
<comment type="subunit">
    <text evidence="1">Interacts with RIOX1; the interaction is direct and inhibits transcription activator activity.</text>
</comment>
<comment type="interaction">
    <interactant intactId="EBI-10713842">
        <id>Q8TDD2</id>
    </interactant>
    <interactant intactId="EBI-11986315">
        <id>Q9H5Z6-2</id>
        <label>FAM124B</label>
    </interactant>
    <organismsDiffer>false</organismsDiffer>
    <experiments>3</experiments>
</comment>
<comment type="interaction">
    <interactant intactId="EBI-10713842">
        <id>Q8TDD2</id>
    </interactant>
    <interactant intactId="EBI-1052570">
        <id>O95995</id>
        <label>GAS8</label>
    </interactant>
    <organismsDiffer>false</organismsDiffer>
    <experiments>3</experiments>
</comment>
<comment type="interaction">
    <interactant intactId="EBI-10713842">
        <id>Q8TDD2</id>
    </interactant>
    <interactant intactId="EBI-347462">
        <id>P47897</id>
        <label>QARS1</label>
    </interactant>
    <organismsDiffer>false</organismsDiffer>
    <experiments>5</experiments>
</comment>
<comment type="interaction">
    <interactant intactId="EBI-10713842">
        <id>Q8TDD2</id>
    </interactant>
    <interactant intactId="EBI-6929619">
        <id>Q9BVG3</id>
        <label>TRIM62</label>
    </interactant>
    <organismsDiffer>false</organismsDiffer>
    <experiments>5</experiments>
</comment>
<comment type="subcellular location">
    <subcellularLocation>
        <location evidence="1">Nucleus</location>
    </subcellularLocation>
</comment>
<comment type="alternative products">
    <event type="alternative splicing"/>
    <isoform>
        <id>Q8TDD2-1</id>
        <name>1</name>
        <name>alpha</name>
        <name>long</name>
        <sequence type="displayed"/>
    </isoform>
    <isoform>
        <id>Q8TDD2-2</id>
        <name>2</name>
        <name>beta</name>
        <name>short</name>
        <sequence type="described" ref="VSP_047639"/>
    </isoform>
</comment>
<comment type="tissue specificity">
    <text evidence="4">Restricted to bone-derived cell.</text>
</comment>
<comment type="domain">
    <text evidence="7">The 9aaTAD motif is a transactivation domain present in a large number of yeast and animal transcription factors.</text>
</comment>
<comment type="PTM">
    <text evidence="6">Ubiquitination at leads to proteasomal degradation. SP7 is a short-live protein with an endogenous half-life of approximately 12 hours.</text>
</comment>
<comment type="PTM">
    <text evidence="1">Propionylated. Depropionylation at Lys-371 by SIRT7 activates transcription factor activity and positively regulates bone formation by osteoblasts.</text>
</comment>
<comment type="disease" evidence="5">
    <disease id="DI-03173">
        <name>Osteogenesis imperfecta 12</name>
        <acronym>OI12</acronym>
        <description>A form of osteogenesis imperfecta, a disorder of bone formation characterized by low bone mass, bone fragility and susceptibility to fractures after minimal trauma. Disease severity ranges from very mild forms without fractures to intrauterine fractures and perinatal lethality. Extraskeletal manifestations, which affect a variable number of patients, are dentinogenesis imperfecta, hearing loss, and blue sclerae. OI12 is an autosomal recessive form characterized by recurrent fractures, mild bone deformations, delayed teeth eruption, no dentinogenesis imperfecta, normal hearing, and white sclerae.</description>
        <dbReference type="MIM" id="613849"/>
    </disease>
    <text>The disease is caused by variants affecting the gene represented in this entry.</text>
</comment>
<comment type="miscellaneous">
    <molecule>Isoform 2</molecule>
    <text evidence="9">Generally expressed at much higher level than isoform 1.</text>
</comment>
<comment type="similarity">
    <text evidence="9">Belongs to the Sp1 C2H2-type zinc-finger protein family.</text>
</comment>
<comment type="online information" name="Osteogenesis imperfecta variant database">
    <link uri="https://www.LOVD.nl/SP7"/>
    <text>The SP7 gene homepage</text>
</comment>
<evidence type="ECO:0000250" key="1">
    <source>
        <dbReference type="UniProtKB" id="Q8VI67"/>
    </source>
</evidence>
<evidence type="ECO:0000255" key="2">
    <source>
        <dbReference type="PROSITE-ProRule" id="PRU00042"/>
    </source>
</evidence>
<evidence type="ECO:0000256" key="3">
    <source>
        <dbReference type="SAM" id="MobiDB-lite"/>
    </source>
</evidence>
<evidence type="ECO:0000269" key="4">
    <source>
    </source>
</evidence>
<evidence type="ECO:0000269" key="5">
    <source>
    </source>
</evidence>
<evidence type="ECO:0000269" key="6">
    <source>
    </source>
</evidence>
<evidence type="ECO:0000269" key="7">
    <source>
    </source>
</evidence>
<evidence type="ECO:0000303" key="8">
    <source>
    </source>
</evidence>
<evidence type="ECO:0000305" key="9"/>
<keyword id="KW-0010">Activator</keyword>
<keyword id="KW-0025">Alternative splicing</keyword>
<keyword id="KW-0238">DNA-binding</keyword>
<keyword id="KW-1017">Isopeptide bond</keyword>
<keyword id="KW-0479">Metal-binding</keyword>
<keyword id="KW-0539">Nucleus</keyword>
<keyword id="KW-1065">Osteogenesis imperfecta</keyword>
<keyword id="KW-1267">Proteomics identification</keyword>
<keyword id="KW-1185">Reference proteome</keyword>
<keyword id="KW-0677">Repeat</keyword>
<keyword id="KW-0804">Transcription</keyword>
<keyword id="KW-0805">Transcription regulation</keyword>
<keyword id="KW-0832">Ubl conjugation</keyword>
<keyword id="KW-0862">Zinc</keyword>
<keyword id="KW-0863">Zinc-finger</keyword>
<reference key="1">
    <citation type="journal article" date="2002" name="Cell">
        <title>The novel zinc finger-containing transcription factor osterix is required for osteoblast differentiation and bone formation.</title>
        <authorList>
            <person name="Nakashima K."/>
            <person name="Zhou X."/>
            <person name="Kunkel G."/>
            <person name="Zhang Z."/>
            <person name="Deng J.M."/>
            <person name="Behringer R.R."/>
            <person name="de Crombrugghe B."/>
        </authorList>
    </citation>
    <scope>NUCLEOTIDE SEQUENCE [MRNA] (ISOFORM 1)</scope>
</reference>
<reference key="2">
    <citation type="journal article" date="2003" name="BMC Genomics">
        <title>Expression of alternatively spliced isoforms of human Sp7 in osteoblast-like cells.</title>
        <authorList>
            <person name="Milona M.-A."/>
            <person name="Gough J.E."/>
            <person name="Edgar A.J."/>
        </authorList>
    </citation>
    <scope>NUCLEOTIDE SEQUENCE [MRNA] (ISOFORMS 1 AND 2)</scope>
</reference>
<reference key="3">
    <citation type="journal article" date="2004" name="Gene">
        <title>Molecular cloning, structure, expression, and chromosomal localization of the human Osterix (SP7) gene.</title>
        <authorList>
            <person name="Gao Y."/>
            <person name="Jheon A."/>
            <person name="Nourkeyhani H."/>
            <person name="Kobayashi H."/>
            <person name="Ganss B."/>
        </authorList>
    </citation>
    <scope>NUCLEOTIDE SEQUENCE [MRNA] (ISOFORM 1)</scope>
    <scope>TISSUE SPECIFICITY</scope>
    <source>
        <tissue>Osteosarcoma</tissue>
    </source>
</reference>
<reference key="4">
    <citation type="journal article" date="2004" name="Nat. Genet.">
        <title>Complete sequencing and characterization of 21,243 full-length human cDNAs.</title>
        <authorList>
            <person name="Ota T."/>
            <person name="Suzuki Y."/>
            <person name="Nishikawa T."/>
            <person name="Otsuki T."/>
            <person name="Sugiyama T."/>
            <person name="Irie R."/>
            <person name="Wakamatsu A."/>
            <person name="Hayashi K."/>
            <person name="Sato H."/>
            <person name="Nagai K."/>
            <person name="Kimura K."/>
            <person name="Makita H."/>
            <person name="Sekine M."/>
            <person name="Obayashi M."/>
            <person name="Nishi T."/>
            <person name="Shibahara T."/>
            <person name="Tanaka T."/>
            <person name="Ishii S."/>
            <person name="Yamamoto J."/>
            <person name="Saito K."/>
            <person name="Kawai Y."/>
            <person name="Isono Y."/>
            <person name="Nakamura Y."/>
            <person name="Nagahari K."/>
            <person name="Murakami K."/>
            <person name="Yasuda T."/>
            <person name="Iwayanagi T."/>
            <person name="Wagatsuma M."/>
            <person name="Shiratori A."/>
            <person name="Sudo H."/>
            <person name="Hosoiri T."/>
            <person name="Kaku Y."/>
            <person name="Kodaira H."/>
            <person name="Kondo H."/>
            <person name="Sugawara M."/>
            <person name="Takahashi M."/>
            <person name="Kanda K."/>
            <person name="Yokoi T."/>
            <person name="Furuya T."/>
            <person name="Kikkawa E."/>
            <person name="Omura Y."/>
            <person name="Abe K."/>
            <person name="Kamihara K."/>
            <person name="Katsuta N."/>
            <person name="Sato K."/>
            <person name="Tanikawa M."/>
            <person name="Yamazaki M."/>
            <person name="Ninomiya K."/>
            <person name="Ishibashi T."/>
            <person name="Yamashita H."/>
            <person name="Murakawa K."/>
            <person name="Fujimori K."/>
            <person name="Tanai H."/>
            <person name="Kimata M."/>
            <person name="Watanabe M."/>
            <person name="Hiraoka S."/>
            <person name="Chiba Y."/>
            <person name="Ishida S."/>
            <person name="Ono Y."/>
            <person name="Takiguchi S."/>
            <person name="Watanabe S."/>
            <person name="Yosida M."/>
            <person name="Hotuta T."/>
            <person name="Kusano J."/>
            <person name="Kanehori K."/>
            <person name="Takahashi-Fujii A."/>
            <person name="Hara H."/>
            <person name="Tanase T.-O."/>
            <person name="Nomura Y."/>
            <person name="Togiya S."/>
            <person name="Komai F."/>
            <person name="Hara R."/>
            <person name="Takeuchi K."/>
            <person name="Arita M."/>
            <person name="Imose N."/>
            <person name="Musashino K."/>
            <person name="Yuuki H."/>
            <person name="Oshima A."/>
            <person name="Sasaki N."/>
            <person name="Aotsuka S."/>
            <person name="Yoshikawa Y."/>
            <person name="Matsunawa H."/>
            <person name="Ichihara T."/>
            <person name="Shiohata N."/>
            <person name="Sano S."/>
            <person name="Moriya S."/>
            <person name="Momiyama H."/>
            <person name="Satoh N."/>
            <person name="Takami S."/>
            <person name="Terashima Y."/>
            <person name="Suzuki O."/>
            <person name="Nakagawa S."/>
            <person name="Senoh A."/>
            <person name="Mizoguchi H."/>
            <person name="Goto Y."/>
            <person name="Shimizu F."/>
            <person name="Wakebe H."/>
            <person name="Hishigaki H."/>
            <person name="Watanabe T."/>
            <person name="Sugiyama A."/>
            <person name="Takemoto M."/>
            <person name="Kawakami B."/>
            <person name="Yamazaki M."/>
            <person name="Watanabe K."/>
            <person name="Kumagai A."/>
            <person name="Itakura S."/>
            <person name="Fukuzumi Y."/>
            <person name="Fujimori Y."/>
            <person name="Komiyama M."/>
            <person name="Tashiro H."/>
            <person name="Tanigami A."/>
            <person name="Fujiwara T."/>
            <person name="Ono T."/>
            <person name="Yamada K."/>
            <person name="Fujii Y."/>
            <person name="Ozaki K."/>
            <person name="Hirao M."/>
            <person name="Ohmori Y."/>
            <person name="Kawabata A."/>
            <person name="Hikiji T."/>
            <person name="Kobatake N."/>
            <person name="Inagaki H."/>
            <person name="Ikema Y."/>
            <person name="Okamoto S."/>
            <person name="Okitani R."/>
            <person name="Kawakami T."/>
            <person name="Noguchi S."/>
            <person name="Itoh T."/>
            <person name="Shigeta K."/>
            <person name="Senba T."/>
            <person name="Matsumura K."/>
            <person name="Nakajima Y."/>
            <person name="Mizuno T."/>
            <person name="Morinaga M."/>
            <person name="Sasaki M."/>
            <person name="Togashi T."/>
            <person name="Oyama M."/>
            <person name="Hata H."/>
            <person name="Watanabe M."/>
            <person name="Komatsu T."/>
            <person name="Mizushima-Sugano J."/>
            <person name="Satoh T."/>
            <person name="Shirai Y."/>
            <person name="Takahashi Y."/>
            <person name="Nakagawa K."/>
            <person name="Okumura K."/>
            <person name="Nagase T."/>
            <person name="Nomura N."/>
            <person name="Kikuchi H."/>
            <person name="Masuho Y."/>
            <person name="Yamashita R."/>
            <person name="Nakai K."/>
            <person name="Yada T."/>
            <person name="Nakamura Y."/>
            <person name="Ohara O."/>
            <person name="Isogai T."/>
            <person name="Sugano S."/>
        </authorList>
    </citation>
    <scope>NUCLEOTIDE SEQUENCE [LARGE SCALE MRNA] (ISOFORM 1)</scope>
    <source>
        <tissue>Trachea</tissue>
    </source>
</reference>
<reference key="5">
    <citation type="journal article" date="2006" name="Nature">
        <title>The finished DNA sequence of human chromosome 12.</title>
        <authorList>
            <person name="Scherer S.E."/>
            <person name="Muzny D.M."/>
            <person name="Buhay C.J."/>
            <person name="Chen R."/>
            <person name="Cree A."/>
            <person name="Ding Y."/>
            <person name="Dugan-Rocha S."/>
            <person name="Gill R."/>
            <person name="Gunaratne P."/>
            <person name="Harris R.A."/>
            <person name="Hawes A.C."/>
            <person name="Hernandez J."/>
            <person name="Hodgson A.V."/>
            <person name="Hume J."/>
            <person name="Jackson A."/>
            <person name="Khan Z.M."/>
            <person name="Kovar-Smith C."/>
            <person name="Lewis L.R."/>
            <person name="Lozado R.J."/>
            <person name="Metzker M.L."/>
            <person name="Milosavljevic A."/>
            <person name="Miner G.R."/>
            <person name="Montgomery K.T."/>
            <person name="Morgan M.B."/>
            <person name="Nazareth L.V."/>
            <person name="Scott G."/>
            <person name="Sodergren E."/>
            <person name="Song X.-Z."/>
            <person name="Steffen D."/>
            <person name="Lovering R.C."/>
            <person name="Wheeler D.A."/>
            <person name="Worley K.C."/>
            <person name="Yuan Y."/>
            <person name="Zhang Z."/>
            <person name="Adams C.Q."/>
            <person name="Ansari-Lari M.A."/>
            <person name="Ayele M."/>
            <person name="Brown M.J."/>
            <person name="Chen G."/>
            <person name="Chen Z."/>
            <person name="Clerc-Blankenburg K.P."/>
            <person name="Davis C."/>
            <person name="Delgado O."/>
            <person name="Dinh H.H."/>
            <person name="Draper H."/>
            <person name="Gonzalez-Garay M.L."/>
            <person name="Havlak P."/>
            <person name="Jackson L.R."/>
            <person name="Jacob L.S."/>
            <person name="Kelly S.H."/>
            <person name="Li L."/>
            <person name="Li Z."/>
            <person name="Liu J."/>
            <person name="Liu W."/>
            <person name="Lu J."/>
            <person name="Maheshwari M."/>
            <person name="Nguyen B.-V."/>
            <person name="Okwuonu G.O."/>
            <person name="Pasternak S."/>
            <person name="Perez L.M."/>
            <person name="Plopper F.J.H."/>
            <person name="Santibanez J."/>
            <person name="Shen H."/>
            <person name="Tabor P.E."/>
            <person name="Verduzco D."/>
            <person name="Waldron L."/>
            <person name="Wang Q."/>
            <person name="Williams G.A."/>
            <person name="Zhang J."/>
            <person name="Zhou J."/>
            <person name="Allen C.C."/>
            <person name="Amin A.G."/>
            <person name="Anyalebechi V."/>
            <person name="Bailey M."/>
            <person name="Barbaria J.A."/>
            <person name="Bimage K.E."/>
            <person name="Bryant N.P."/>
            <person name="Burch P.E."/>
            <person name="Burkett C.E."/>
            <person name="Burrell K.L."/>
            <person name="Calderon E."/>
            <person name="Cardenas V."/>
            <person name="Carter K."/>
            <person name="Casias K."/>
            <person name="Cavazos I."/>
            <person name="Cavazos S.R."/>
            <person name="Ceasar H."/>
            <person name="Chacko J."/>
            <person name="Chan S.N."/>
            <person name="Chavez D."/>
            <person name="Christopoulos C."/>
            <person name="Chu J."/>
            <person name="Cockrell R."/>
            <person name="Cox C.D."/>
            <person name="Dang M."/>
            <person name="Dathorne S.R."/>
            <person name="David R."/>
            <person name="Davis C.M."/>
            <person name="Davy-Carroll L."/>
            <person name="Deshazo D.R."/>
            <person name="Donlin J.E."/>
            <person name="D'Souza L."/>
            <person name="Eaves K.A."/>
            <person name="Egan A."/>
            <person name="Emery-Cohen A.J."/>
            <person name="Escotto M."/>
            <person name="Flagg N."/>
            <person name="Forbes L.D."/>
            <person name="Gabisi A.M."/>
            <person name="Garza M."/>
            <person name="Hamilton C."/>
            <person name="Henderson N."/>
            <person name="Hernandez O."/>
            <person name="Hines S."/>
            <person name="Hogues M.E."/>
            <person name="Huang M."/>
            <person name="Idlebird D.G."/>
            <person name="Johnson R."/>
            <person name="Jolivet A."/>
            <person name="Jones S."/>
            <person name="Kagan R."/>
            <person name="King L.M."/>
            <person name="Leal B."/>
            <person name="Lebow H."/>
            <person name="Lee S."/>
            <person name="LeVan J.M."/>
            <person name="Lewis L.C."/>
            <person name="London P."/>
            <person name="Lorensuhewa L.M."/>
            <person name="Loulseged H."/>
            <person name="Lovett D.A."/>
            <person name="Lucier A."/>
            <person name="Lucier R.L."/>
            <person name="Ma J."/>
            <person name="Madu R.C."/>
            <person name="Mapua P."/>
            <person name="Martindale A.D."/>
            <person name="Martinez E."/>
            <person name="Massey E."/>
            <person name="Mawhiney S."/>
            <person name="Meador M.G."/>
            <person name="Mendez S."/>
            <person name="Mercado C."/>
            <person name="Mercado I.C."/>
            <person name="Merritt C.E."/>
            <person name="Miner Z.L."/>
            <person name="Minja E."/>
            <person name="Mitchell T."/>
            <person name="Mohabbat F."/>
            <person name="Mohabbat K."/>
            <person name="Montgomery B."/>
            <person name="Moore N."/>
            <person name="Morris S."/>
            <person name="Munidasa M."/>
            <person name="Ngo R.N."/>
            <person name="Nguyen N.B."/>
            <person name="Nickerson E."/>
            <person name="Nwaokelemeh O.O."/>
            <person name="Nwokenkwo S."/>
            <person name="Obregon M."/>
            <person name="Oguh M."/>
            <person name="Oragunye N."/>
            <person name="Oviedo R.J."/>
            <person name="Parish B.J."/>
            <person name="Parker D.N."/>
            <person name="Parrish J."/>
            <person name="Parks K.L."/>
            <person name="Paul H.A."/>
            <person name="Payton B.A."/>
            <person name="Perez A."/>
            <person name="Perrin W."/>
            <person name="Pickens A."/>
            <person name="Primus E.L."/>
            <person name="Pu L.-L."/>
            <person name="Puazo M."/>
            <person name="Quiles M.M."/>
            <person name="Quiroz J.B."/>
            <person name="Rabata D."/>
            <person name="Reeves K."/>
            <person name="Ruiz S.J."/>
            <person name="Shao H."/>
            <person name="Sisson I."/>
            <person name="Sonaike T."/>
            <person name="Sorelle R.P."/>
            <person name="Sutton A.E."/>
            <person name="Svatek A.F."/>
            <person name="Svetz L.A."/>
            <person name="Tamerisa K.S."/>
            <person name="Taylor T.R."/>
            <person name="Teague B."/>
            <person name="Thomas N."/>
            <person name="Thorn R.D."/>
            <person name="Trejos Z.Y."/>
            <person name="Trevino B.K."/>
            <person name="Ukegbu O.N."/>
            <person name="Urban J.B."/>
            <person name="Vasquez L.I."/>
            <person name="Vera V.A."/>
            <person name="Villasana D.M."/>
            <person name="Wang L."/>
            <person name="Ward-Moore S."/>
            <person name="Warren J.T."/>
            <person name="Wei X."/>
            <person name="White F."/>
            <person name="Williamson A.L."/>
            <person name="Wleczyk R."/>
            <person name="Wooden H.S."/>
            <person name="Wooden S.H."/>
            <person name="Yen J."/>
            <person name="Yoon L."/>
            <person name="Yoon V."/>
            <person name="Zorrilla S.E."/>
            <person name="Nelson D."/>
            <person name="Kucherlapati R."/>
            <person name="Weinstock G."/>
            <person name="Gibbs R.A."/>
        </authorList>
    </citation>
    <scope>NUCLEOTIDE SEQUENCE [LARGE SCALE GENOMIC DNA]</scope>
</reference>
<reference key="6">
    <citation type="submission" date="2005-07" db="EMBL/GenBank/DDBJ databases">
        <authorList>
            <person name="Mural R.J."/>
            <person name="Istrail S."/>
            <person name="Sutton G.G."/>
            <person name="Florea L."/>
            <person name="Halpern A.L."/>
            <person name="Mobarry C.M."/>
            <person name="Lippert R."/>
            <person name="Walenz B."/>
            <person name="Shatkay H."/>
            <person name="Dew I."/>
            <person name="Miller J.R."/>
            <person name="Flanigan M.J."/>
            <person name="Edwards N.J."/>
            <person name="Bolanos R."/>
            <person name="Fasulo D."/>
            <person name="Halldorsson B.V."/>
            <person name="Hannenhalli S."/>
            <person name="Turner R."/>
            <person name="Yooseph S."/>
            <person name="Lu F."/>
            <person name="Nusskern D.R."/>
            <person name="Shue B.C."/>
            <person name="Zheng X.H."/>
            <person name="Zhong F."/>
            <person name="Delcher A.L."/>
            <person name="Huson D.H."/>
            <person name="Kravitz S.A."/>
            <person name="Mouchard L."/>
            <person name="Reinert K."/>
            <person name="Remington K.A."/>
            <person name="Clark A.G."/>
            <person name="Waterman M.S."/>
            <person name="Eichler E.E."/>
            <person name="Adams M.D."/>
            <person name="Hunkapiller M.W."/>
            <person name="Myers E.W."/>
            <person name="Venter J.C."/>
        </authorList>
    </citation>
    <scope>NUCLEOTIDE SEQUENCE [LARGE SCALE GENOMIC DNA]</scope>
</reference>
<reference key="7">
    <citation type="journal article" date="2004" name="Genome Res.">
        <title>The status, quality, and expansion of the NIH full-length cDNA project: the Mammalian Gene Collection (MGC).</title>
        <authorList>
            <consortium name="The MGC Project Team"/>
        </authorList>
    </citation>
    <scope>NUCLEOTIDE SEQUENCE [LARGE SCALE MRNA] (ISOFORM 1)</scope>
    <source>
        <tissue>Placenta</tissue>
    </source>
</reference>
<reference key="8">
    <citation type="journal article" date="2010" name="Am. J. Hum. Genet.">
        <title>Identification of a frameshift mutation in Osterix in a patient with recessive osteogenesis imperfecta.</title>
        <authorList>
            <person name="Lapunzina P."/>
            <person name="Aglan M."/>
            <person name="Temtamy S."/>
            <person name="Caparros-Martin J.A."/>
            <person name="Valencia M."/>
            <person name="Leton R."/>
            <person name="Martinez-Glez V."/>
            <person name="Elhossini R."/>
            <person name="Amr K."/>
            <person name="Vilaboa N."/>
            <person name="Ruiz-Perez V.L."/>
        </authorList>
    </citation>
    <scope>INVOLVEMENT IN OI12</scope>
</reference>
<reference key="9">
    <citation type="journal article" date="2013" name="PLoS ONE">
        <title>Characterization of Osterix protein stability and physiological role in osteoblast differentiation.</title>
        <authorList>
            <person name="Peng Y."/>
            <person name="Shi K."/>
            <person name="Wang L."/>
            <person name="Lu J."/>
            <person name="Li H."/>
            <person name="Pan S."/>
            <person name="Ma C."/>
        </authorList>
    </citation>
    <scope>FUNCTION</scope>
    <scope>UBIQUITINATION AT LYS-58 AND LYS-230</scope>
    <scope>MUTAGENESIS OF LYS-58 AND LYS-230</scope>
</reference>
<reference key="10">
    <citation type="journal article" date="2020" name="Cell. Mol. Life Sci.">
        <title>The evolution of the 9aaTAD domain in Sp2 proteins: inactivation with valines and intron reservoirs.</title>
        <authorList>
            <person name="Piskacek M."/>
            <person name="Havelka M."/>
            <person name="Jendruchova K."/>
            <person name="Knight A."/>
            <person name="Keegan L.P."/>
        </authorList>
    </citation>
    <scope>9AATAD MOTIF</scope>
</reference>
<proteinExistence type="evidence at protein level"/>